<proteinExistence type="inferred from homology"/>
<protein>
    <recommendedName>
        <fullName evidence="1">Glycine dehydrogenase (decarboxylating)</fullName>
        <ecNumber evidence="1">1.4.4.2</ecNumber>
    </recommendedName>
    <alternativeName>
        <fullName evidence="1">Glycine cleavage system P-protein</fullName>
    </alternativeName>
    <alternativeName>
        <fullName evidence="1">Glycine decarboxylase</fullName>
    </alternativeName>
    <alternativeName>
        <fullName evidence="1">Glycine dehydrogenase (aminomethyl-transferring)</fullName>
    </alternativeName>
</protein>
<feature type="chain" id="PRO_0000166923" description="Glycine dehydrogenase (decarboxylating)">
    <location>
        <begin position="1"/>
        <end position="964"/>
    </location>
</feature>
<feature type="modified residue" description="N6-(pyridoxal phosphate)lysine" evidence="1">
    <location>
        <position position="711"/>
    </location>
</feature>
<organism>
    <name type="scientific">Prochlorococcus marinus (strain SARG / CCMP1375 / SS120)</name>
    <dbReference type="NCBI Taxonomy" id="167539"/>
    <lineage>
        <taxon>Bacteria</taxon>
        <taxon>Bacillati</taxon>
        <taxon>Cyanobacteriota</taxon>
        <taxon>Cyanophyceae</taxon>
        <taxon>Synechococcales</taxon>
        <taxon>Prochlorococcaceae</taxon>
        <taxon>Prochlorococcus</taxon>
    </lineage>
</organism>
<sequence length="964" mass="106218">MRNTKASKFSDRHLGLIEEAQVEILNALGHADINDFISSVVPEEILDAQPPDELLPKALNEIEALEELRSIAKKNQIKRSLIGLGYYGTYTPAVIQRHVFENPAWYTSYTPYQAEIAQGRLEALFNFQTLITELTGLPIANASLLDEGTAAAEAMSLSFAVNKQTKARKFIVDDQVLPQTLAVLKTRAEPLELDIEVVNLTDLVINETVFGLLIQLPGKSGQLWDPSSLIAQAHEFNALVTVAIDPLAQVLIAPMGQLGVDIAIGSSQRFGVPIGFGGPHAAFFAIKEEYKRLVPGRLVGQSIDSKGHSALRLALQTREQHIRRDKATSNICTAQALLATIASFYAVYHGPHGLEEIAKNIIYLRSQLELYLKEFGYTFAPDCRFDTLEIHCLEAPEIHRLSILSGFNLRILPLGASIEKSKGFAVSFDELSTTKELYKLCKIFADVKDKNFEPRENTNFNFKESLTSLPLRTTPWLKQQVFNNYRTETELMRYIQKLASRDFSLVNGMIPLGSCTMKLNATAELLPITWKEFSSIHPFVPSDQAKGYGYLSEQLEGWLCALTGFDGVSLQPNAGSQGEFAGLLVIRAWHKAINQADRNICLIPKSAHGTNPASAVMAGFKVVAVECDEYGNIDFEDLVLKVETYSSELGALMITYPSTHGVFEPNIRQICDQVHLHGGQVYLDGANLNAQVGLCRPGAFGADVCHLNLHKTFCIPHGGGGPGIGPIAVAKHLVAFLPSKNFHASDNNAAIGAISASPLGSASILPISWMYIRMMGADGLRQASSLAILSANYIANKLDPYFQVLFKAPNGKVAHECILDLRSIKRITGIEVDDVAKRLMDYGFHAPTISWPVAGTLMIEPTESESFEEINRFCEAMISIRSEIDAIESGITDLSNNPLRLAPHTMETVTAEIWDRPYTRQQAAFPLKDQFMNKFWPAVSRIDNAFGDRNLVCSCSTLEELSET</sequence>
<reference key="1">
    <citation type="journal article" date="2003" name="Proc. Natl. Acad. Sci. U.S.A.">
        <title>Genome sequence of the cyanobacterium Prochlorococcus marinus SS120, a nearly minimal oxyphototrophic genome.</title>
        <authorList>
            <person name="Dufresne A."/>
            <person name="Salanoubat M."/>
            <person name="Partensky F."/>
            <person name="Artiguenave F."/>
            <person name="Axmann I.M."/>
            <person name="Barbe V."/>
            <person name="Duprat S."/>
            <person name="Galperin M.Y."/>
            <person name="Koonin E.V."/>
            <person name="Le Gall F."/>
            <person name="Makarova K.S."/>
            <person name="Ostrowski M."/>
            <person name="Oztas S."/>
            <person name="Robert C."/>
            <person name="Rogozin I.B."/>
            <person name="Scanlan D.J."/>
            <person name="Tandeau de Marsac N."/>
            <person name="Weissenbach J."/>
            <person name="Wincker P."/>
            <person name="Wolf Y.I."/>
            <person name="Hess W.R."/>
        </authorList>
    </citation>
    <scope>NUCLEOTIDE SEQUENCE [LARGE SCALE GENOMIC DNA]</scope>
    <source>
        <strain>SARG / CCMP1375 / SS120</strain>
    </source>
</reference>
<evidence type="ECO:0000255" key="1">
    <source>
        <dbReference type="HAMAP-Rule" id="MF_00711"/>
    </source>
</evidence>
<name>GCSP_PROMA</name>
<accession>Q7V9K4</accession>
<keyword id="KW-0560">Oxidoreductase</keyword>
<keyword id="KW-0663">Pyridoxal phosphate</keyword>
<keyword id="KW-1185">Reference proteome</keyword>
<comment type="function">
    <text evidence="1">The glycine cleavage system catalyzes the degradation of glycine. The P protein binds the alpha-amino group of glycine through its pyridoxal phosphate cofactor; CO(2) is released and the remaining methylamine moiety is then transferred to the lipoamide cofactor of the H protein.</text>
</comment>
<comment type="catalytic activity">
    <reaction evidence="1">
        <text>N(6)-[(R)-lipoyl]-L-lysyl-[glycine-cleavage complex H protein] + glycine + H(+) = N(6)-[(R)-S(8)-aminomethyldihydrolipoyl]-L-lysyl-[glycine-cleavage complex H protein] + CO2</text>
        <dbReference type="Rhea" id="RHEA:24304"/>
        <dbReference type="Rhea" id="RHEA-COMP:10494"/>
        <dbReference type="Rhea" id="RHEA-COMP:10495"/>
        <dbReference type="ChEBI" id="CHEBI:15378"/>
        <dbReference type="ChEBI" id="CHEBI:16526"/>
        <dbReference type="ChEBI" id="CHEBI:57305"/>
        <dbReference type="ChEBI" id="CHEBI:83099"/>
        <dbReference type="ChEBI" id="CHEBI:83143"/>
        <dbReference type="EC" id="1.4.4.2"/>
    </reaction>
</comment>
<comment type="cofactor">
    <cofactor evidence="1">
        <name>pyridoxal 5'-phosphate</name>
        <dbReference type="ChEBI" id="CHEBI:597326"/>
    </cofactor>
</comment>
<comment type="subunit">
    <text evidence="1">The glycine cleavage system is composed of four proteins: P, T, L and H.</text>
</comment>
<comment type="similarity">
    <text evidence="1">Belongs to the GcvP family.</text>
</comment>
<gene>
    <name evidence="1" type="primary">gcvP</name>
    <name type="ordered locus">Pro_1829</name>
</gene>
<dbReference type="EC" id="1.4.4.2" evidence="1"/>
<dbReference type="EMBL" id="AE017126">
    <property type="protein sequence ID" value="AAQ00873.1"/>
    <property type="molecule type" value="Genomic_DNA"/>
</dbReference>
<dbReference type="RefSeq" id="NP_876220.1">
    <property type="nucleotide sequence ID" value="NC_005042.1"/>
</dbReference>
<dbReference type="RefSeq" id="WP_011125978.1">
    <property type="nucleotide sequence ID" value="NC_005042.1"/>
</dbReference>
<dbReference type="SMR" id="Q7V9K4"/>
<dbReference type="STRING" id="167539.Pro_1829"/>
<dbReference type="EnsemblBacteria" id="AAQ00873">
    <property type="protein sequence ID" value="AAQ00873"/>
    <property type="gene ID" value="Pro_1829"/>
</dbReference>
<dbReference type="KEGG" id="pma:Pro_1829"/>
<dbReference type="PATRIC" id="fig|167539.5.peg.1931"/>
<dbReference type="eggNOG" id="COG0403">
    <property type="taxonomic scope" value="Bacteria"/>
</dbReference>
<dbReference type="eggNOG" id="COG1003">
    <property type="taxonomic scope" value="Bacteria"/>
</dbReference>
<dbReference type="HOGENOM" id="CLU_004620_3_0_3"/>
<dbReference type="OrthoDB" id="9801272at2"/>
<dbReference type="Proteomes" id="UP000001420">
    <property type="component" value="Chromosome"/>
</dbReference>
<dbReference type="GO" id="GO:0005829">
    <property type="term" value="C:cytosol"/>
    <property type="evidence" value="ECO:0007669"/>
    <property type="project" value="TreeGrafter"/>
</dbReference>
<dbReference type="GO" id="GO:0005960">
    <property type="term" value="C:glycine cleavage complex"/>
    <property type="evidence" value="ECO:0007669"/>
    <property type="project" value="TreeGrafter"/>
</dbReference>
<dbReference type="GO" id="GO:0016594">
    <property type="term" value="F:glycine binding"/>
    <property type="evidence" value="ECO:0007669"/>
    <property type="project" value="TreeGrafter"/>
</dbReference>
<dbReference type="GO" id="GO:0004375">
    <property type="term" value="F:glycine dehydrogenase (decarboxylating) activity"/>
    <property type="evidence" value="ECO:0007669"/>
    <property type="project" value="UniProtKB-EC"/>
</dbReference>
<dbReference type="GO" id="GO:0030170">
    <property type="term" value="F:pyridoxal phosphate binding"/>
    <property type="evidence" value="ECO:0007669"/>
    <property type="project" value="TreeGrafter"/>
</dbReference>
<dbReference type="GO" id="GO:0019464">
    <property type="term" value="P:glycine decarboxylation via glycine cleavage system"/>
    <property type="evidence" value="ECO:0007669"/>
    <property type="project" value="UniProtKB-UniRule"/>
</dbReference>
<dbReference type="CDD" id="cd00613">
    <property type="entry name" value="GDC-P"/>
    <property type="match status" value="2"/>
</dbReference>
<dbReference type="FunFam" id="3.40.640.10:FF:000005">
    <property type="entry name" value="Glycine dehydrogenase (decarboxylating), mitochondrial"/>
    <property type="match status" value="1"/>
</dbReference>
<dbReference type="FunFam" id="3.40.640.10:FF:000007">
    <property type="entry name" value="glycine dehydrogenase (Decarboxylating), mitochondrial"/>
    <property type="match status" value="1"/>
</dbReference>
<dbReference type="Gene3D" id="3.90.1150.10">
    <property type="entry name" value="Aspartate Aminotransferase, domain 1"/>
    <property type="match status" value="2"/>
</dbReference>
<dbReference type="Gene3D" id="3.40.640.10">
    <property type="entry name" value="Type I PLP-dependent aspartate aminotransferase-like (Major domain)"/>
    <property type="match status" value="2"/>
</dbReference>
<dbReference type="HAMAP" id="MF_00711">
    <property type="entry name" value="GcvP"/>
    <property type="match status" value="1"/>
</dbReference>
<dbReference type="InterPro" id="IPR003437">
    <property type="entry name" value="GcvP"/>
</dbReference>
<dbReference type="InterPro" id="IPR049316">
    <property type="entry name" value="GDC-P_C"/>
</dbReference>
<dbReference type="InterPro" id="IPR049315">
    <property type="entry name" value="GDC-P_N"/>
</dbReference>
<dbReference type="InterPro" id="IPR020581">
    <property type="entry name" value="GDC_P"/>
</dbReference>
<dbReference type="InterPro" id="IPR015424">
    <property type="entry name" value="PyrdxlP-dep_Trfase"/>
</dbReference>
<dbReference type="InterPro" id="IPR015421">
    <property type="entry name" value="PyrdxlP-dep_Trfase_major"/>
</dbReference>
<dbReference type="InterPro" id="IPR015422">
    <property type="entry name" value="PyrdxlP-dep_Trfase_small"/>
</dbReference>
<dbReference type="NCBIfam" id="TIGR00461">
    <property type="entry name" value="gcvP"/>
    <property type="match status" value="1"/>
</dbReference>
<dbReference type="PANTHER" id="PTHR11773:SF1">
    <property type="entry name" value="GLYCINE DEHYDROGENASE (DECARBOXYLATING), MITOCHONDRIAL"/>
    <property type="match status" value="1"/>
</dbReference>
<dbReference type="PANTHER" id="PTHR11773">
    <property type="entry name" value="GLYCINE DEHYDROGENASE, DECARBOXYLATING"/>
    <property type="match status" value="1"/>
</dbReference>
<dbReference type="Pfam" id="PF21478">
    <property type="entry name" value="GcvP2_C"/>
    <property type="match status" value="1"/>
</dbReference>
<dbReference type="Pfam" id="PF02347">
    <property type="entry name" value="GDC-P"/>
    <property type="match status" value="2"/>
</dbReference>
<dbReference type="SUPFAM" id="SSF53383">
    <property type="entry name" value="PLP-dependent transferases"/>
    <property type="match status" value="2"/>
</dbReference>